<gene>
    <name evidence="1" type="primary">nadA</name>
    <name type="ordered locus">Cgl1069</name>
    <name type="ordered locus">cg1216</name>
</gene>
<protein>
    <recommendedName>
        <fullName evidence="1">Quinolinate synthase</fullName>
        <ecNumber evidence="1">2.5.1.72</ecNumber>
    </recommendedName>
</protein>
<reference key="1">
    <citation type="journal article" date="2003" name="Appl. Microbiol. Biotechnol.">
        <title>The Corynebacterium glutamicum genome: features and impacts on biotechnological processes.</title>
        <authorList>
            <person name="Ikeda M."/>
            <person name="Nakagawa S."/>
        </authorList>
    </citation>
    <scope>NUCLEOTIDE SEQUENCE [LARGE SCALE GENOMIC DNA]</scope>
    <source>
        <strain>ATCC 13032 / DSM 20300 / JCM 1318 / BCRC 11384 / CCUG 27702 / LMG 3730 / NBRC 12168 / NCIMB 10025 / NRRL B-2784 / 534</strain>
    </source>
</reference>
<reference key="2">
    <citation type="journal article" date="2003" name="J. Biotechnol.">
        <title>The complete Corynebacterium glutamicum ATCC 13032 genome sequence and its impact on the production of L-aspartate-derived amino acids and vitamins.</title>
        <authorList>
            <person name="Kalinowski J."/>
            <person name="Bathe B."/>
            <person name="Bartels D."/>
            <person name="Bischoff N."/>
            <person name="Bott M."/>
            <person name="Burkovski A."/>
            <person name="Dusch N."/>
            <person name="Eggeling L."/>
            <person name="Eikmanns B.J."/>
            <person name="Gaigalat L."/>
            <person name="Goesmann A."/>
            <person name="Hartmann M."/>
            <person name="Huthmacher K."/>
            <person name="Kraemer R."/>
            <person name="Linke B."/>
            <person name="McHardy A.C."/>
            <person name="Meyer F."/>
            <person name="Moeckel B."/>
            <person name="Pfefferle W."/>
            <person name="Puehler A."/>
            <person name="Rey D.A."/>
            <person name="Rueckert C."/>
            <person name="Rupp O."/>
            <person name="Sahm H."/>
            <person name="Wendisch V.F."/>
            <person name="Wiegraebe I."/>
            <person name="Tauch A."/>
        </authorList>
    </citation>
    <scope>NUCLEOTIDE SEQUENCE [LARGE SCALE GENOMIC DNA]</scope>
    <source>
        <strain>ATCC 13032 / DSM 20300 / JCM 1318 / BCRC 11384 / CCUG 27702 / LMG 3730 / NBRC 12168 / NCIMB 10025 / NRRL B-2784 / 534</strain>
    </source>
</reference>
<proteinExistence type="inferred from homology"/>
<comment type="function">
    <text evidence="1">Catalyzes the condensation of iminoaspartate with dihydroxyacetone phosphate to form quinolinate.</text>
</comment>
<comment type="catalytic activity">
    <reaction evidence="1">
        <text>iminosuccinate + dihydroxyacetone phosphate = quinolinate + phosphate + 2 H2O + H(+)</text>
        <dbReference type="Rhea" id="RHEA:25888"/>
        <dbReference type="ChEBI" id="CHEBI:15377"/>
        <dbReference type="ChEBI" id="CHEBI:15378"/>
        <dbReference type="ChEBI" id="CHEBI:29959"/>
        <dbReference type="ChEBI" id="CHEBI:43474"/>
        <dbReference type="ChEBI" id="CHEBI:57642"/>
        <dbReference type="ChEBI" id="CHEBI:77875"/>
        <dbReference type="EC" id="2.5.1.72"/>
    </reaction>
    <physiologicalReaction direction="left-to-right" evidence="1">
        <dbReference type="Rhea" id="RHEA:25889"/>
    </physiologicalReaction>
</comment>
<comment type="cofactor">
    <cofactor evidence="1">
        <name>[4Fe-4S] cluster</name>
        <dbReference type="ChEBI" id="CHEBI:49883"/>
    </cofactor>
    <text evidence="1">Binds 1 [4Fe-4S] cluster per subunit.</text>
</comment>
<comment type="pathway">
    <text evidence="1">Cofactor biosynthesis; NAD(+) biosynthesis; quinolinate from iminoaspartate: step 1/1.</text>
</comment>
<comment type="subcellular location">
    <subcellularLocation>
        <location evidence="1">Cytoplasm</location>
    </subcellularLocation>
</comment>
<comment type="similarity">
    <text evidence="1">Belongs to the quinolinate synthase family. Type 3 subfamily.</text>
</comment>
<comment type="sequence caution" evidence="2">
    <conflict type="erroneous initiation">
        <sequence resource="EMBL-CDS" id="CAF19774"/>
    </conflict>
</comment>
<sequence length="394" mass="42876">MPDVYGPGASQNDPIPAHAPRQQVLPEEYQRASDDELHRRIREAKDTLGDKVVILGHFYQRDEVIQHADFVGDSFQLARAAKTRPEAEAIVFCGVHFMAETADLLSTDEQSVILPNLAAGCSMADMADLDSVEDCWEQLTSIYGDDTLIPVTYMNSSAALKGFVGEHGGIVCTSSNARSVLEWAFERGQRVLFFPDQHLGRNTAKAMGIGIDQMPLWNPNKPLGGNTVSELENAKVLLWHGFCSVHKRFTVEQINKARAEYPDVHVIVHPESPMPVVDAADSSGSTDFIVKAIQAAPAGSTFAIGTEINLVQRLAAQYPQHTIFCLDPVICPCSTMYRIHPGYLAWALEELVAGNVINQISVSESVAAPARVALERMLSVVPAAPVTPSSSKDA</sequence>
<organism>
    <name type="scientific">Corynebacterium glutamicum (strain ATCC 13032 / DSM 20300 / JCM 1318 / BCRC 11384 / CCUG 27702 / LMG 3730 / NBRC 12168 / NCIMB 10025 / NRRL B-2784 / 534)</name>
    <dbReference type="NCBI Taxonomy" id="196627"/>
    <lineage>
        <taxon>Bacteria</taxon>
        <taxon>Bacillati</taxon>
        <taxon>Actinomycetota</taxon>
        <taxon>Actinomycetes</taxon>
        <taxon>Mycobacteriales</taxon>
        <taxon>Corynebacteriaceae</taxon>
        <taxon>Corynebacterium</taxon>
    </lineage>
</organism>
<keyword id="KW-0004">4Fe-4S</keyword>
<keyword id="KW-0963">Cytoplasm</keyword>
<keyword id="KW-0408">Iron</keyword>
<keyword id="KW-0411">Iron-sulfur</keyword>
<keyword id="KW-0479">Metal-binding</keyword>
<keyword id="KW-0662">Pyridine nucleotide biosynthesis</keyword>
<keyword id="KW-1185">Reference proteome</keyword>
<keyword id="KW-0808">Transferase</keyword>
<feature type="chain" id="PRO_0000155817" description="Quinolinate synthase">
    <location>
        <begin position="1"/>
        <end position="394"/>
    </location>
</feature>
<feature type="binding site" evidence="1">
    <location>
        <position position="57"/>
    </location>
    <ligand>
        <name>iminosuccinate</name>
        <dbReference type="ChEBI" id="CHEBI:77875"/>
    </ligand>
</feature>
<feature type="binding site" evidence="1">
    <location>
        <position position="74"/>
    </location>
    <ligand>
        <name>iminosuccinate</name>
        <dbReference type="ChEBI" id="CHEBI:77875"/>
    </ligand>
</feature>
<feature type="binding site" evidence="1">
    <location>
        <position position="121"/>
    </location>
    <ligand>
        <name>[4Fe-4S] cluster</name>
        <dbReference type="ChEBI" id="CHEBI:49883"/>
    </ligand>
</feature>
<feature type="binding site" evidence="1">
    <location>
        <begin position="153"/>
        <end position="155"/>
    </location>
    <ligand>
        <name>iminosuccinate</name>
        <dbReference type="ChEBI" id="CHEBI:77875"/>
    </ligand>
</feature>
<feature type="binding site" evidence="1">
    <location>
        <position position="174"/>
    </location>
    <ligand>
        <name>iminosuccinate</name>
        <dbReference type="ChEBI" id="CHEBI:77875"/>
    </ligand>
</feature>
<feature type="binding site" evidence="1">
    <location>
        <position position="243"/>
    </location>
    <ligand>
        <name>[4Fe-4S] cluster</name>
        <dbReference type="ChEBI" id="CHEBI:49883"/>
    </ligand>
</feature>
<feature type="binding site" evidence="1">
    <location>
        <begin position="269"/>
        <end position="271"/>
    </location>
    <ligand>
        <name>iminosuccinate</name>
        <dbReference type="ChEBI" id="CHEBI:77875"/>
    </ligand>
</feature>
<feature type="binding site" evidence="1">
    <location>
        <position position="286"/>
    </location>
    <ligand>
        <name>iminosuccinate</name>
        <dbReference type="ChEBI" id="CHEBI:77875"/>
    </ligand>
</feature>
<feature type="binding site" evidence="1">
    <location>
        <position position="333"/>
    </location>
    <ligand>
        <name>[4Fe-4S] cluster</name>
        <dbReference type="ChEBI" id="CHEBI:49883"/>
    </ligand>
</feature>
<evidence type="ECO:0000255" key="1">
    <source>
        <dbReference type="HAMAP-Rule" id="MF_00569"/>
    </source>
</evidence>
<evidence type="ECO:0000305" key="2"/>
<accession>Q8NRI0</accession>
<dbReference type="EC" id="2.5.1.72" evidence="1"/>
<dbReference type="EMBL" id="BA000036">
    <property type="protein sequence ID" value="BAB98462.1"/>
    <property type="molecule type" value="Genomic_DNA"/>
</dbReference>
<dbReference type="EMBL" id="BX927151">
    <property type="protein sequence ID" value="CAF19774.1"/>
    <property type="status" value="ALT_INIT"/>
    <property type="molecule type" value="Genomic_DNA"/>
</dbReference>
<dbReference type="RefSeq" id="NP_600297.1">
    <property type="nucleotide sequence ID" value="NC_003450.3"/>
</dbReference>
<dbReference type="SMR" id="Q8NRI0"/>
<dbReference type="STRING" id="196627.cg1216"/>
<dbReference type="KEGG" id="cgb:cg1216"/>
<dbReference type="KEGG" id="cgl:Cgl1069"/>
<dbReference type="PATRIC" id="fig|196627.13.peg.1048"/>
<dbReference type="eggNOG" id="COG0379">
    <property type="taxonomic scope" value="Bacteria"/>
</dbReference>
<dbReference type="HOGENOM" id="CLU_047382_2_0_11"/>
<dbReference type="OrthoDB" id="9801204at2"/>
<dbReference type="BioCyc" id="CORYNE:G18NG-10641-MONOMER"/>
<dbReference type="UniPathway" id="UPA00253">
    <property type="reaction ID" value="UER00327"/>
</dbReference>
<dbReference type="Proteomes" id="UP000000582">
    <property type="component" value="Chromosome"/>
</dbReference>
<dbReference type="Proteomes" id="UP000001009">
    <property type="component" value="Chromosome"/>
</dbReference>
<dbReference type="GO" id="GO:0005829">
    <property type="term" value="C:cytosol"/>
    <property type="evidence" value="ECO:0007669"/>
    <property type="project" value="TreeGrafter"/>
</dbReference>
<dbReference type="GO" id="GO:0051539">
    <property type="term" value="F:4 iron, 4 sulfur cluster binding"/>
    <property type="evidence" value="ECO:0007669"/>
    <property type="project" value="UniProtKB-KW"/>
</dbReference>
<dbReference type="GO" id="GO:0046872">
    <property type="term" value="F:metal ion binding"/>
    <property type="evidence" value="ECO:0007669"/>
    <property type="project" value="UniProtKB-KW"/>
</dbReference>
<dbReference type="GO" id="GO:0008987">
    <property type="term" value="F:quinolinate synthetase A activity"/>
    <property type="evidence" value="ECO:0007669"/>
    <property type="project" value="UniProtKB-UniRule"/>
</dbReference>
<dbReference type="GO" id="GO:0034628">
    <property type="term" value="P:'de novo' NAD biosynthetic process from L-aspartate"/>
    <property type="evidence" value="ECO:0007669"/>
    <property type="project" value="TreeGrafter"/>
</dbReference>
<dbReference type="FunFam" id="3.40.50.10800:FF:000001">
    <property type="entry name" value="Quinolinate synthase A"/>
    <property type="match status" value="1"/>
</dbReference>
<dbReference type="Gene3D" id="3.40.50.10800">
    <property type="entry name" value="NadA-like"/>
    <property type="match status" value="3"/>
</dbReference>
<dbReference type="HAMAP" id="MF_00569">
    <property type="entry name" value="NadA_type3"/>
    <property type="match status" value="1"/>
</dbReference>
<dbReference type="InterPro" id="IPR003473">
    <property type="entry name" value="NadA"/>
</dbReference>
<dbReference type="InterPro" id="IPR036094">
    <property type="entry name" value="NadA_sf"/>
</dbReference>
<dbReference type="InterPro" id="IPR023515">
    <property type="entry name" value="Quinolinate_synth_A_type3"/>
</dbReference>
<dbReference type="NCBIfam" id="TIGR00550">
    <property type="entry name" value="nadA"/>
    <property type="match status" value="1"/>
</dbReference>
<dbReference type="NCBIfam" id="NF006883">
    <property type="entry name" value="PRK09375.2-4"/>
    <property type="match status" value="1"/>
</dbReference>
<dbReference type="NCBIfam" id="NF006884">
    <property type="entry name" value="PRK09375.2-5"/>
    <property type="match status" value="1"/>
</dbReference>
<dbReference type="PANTHER" id="PTHR30573:SF0">
    <property type="entry name" value="QUINOLINATE SYNTHASE, CHLOROPLASTIC"/>
    <property type="match status" value="1"/>
</dbReference>
<dbReference type="PANTHER" id="PTHR30573">
    <property type="entry name" value="QUINOLINATE SYNTHETASE A"/>
    <property type="match status" value="1"/>
</dbReference>
<dbReference type="Pfam" id="PF02445">
    <property type="entry name" value="NadA"/>
    <property type="match status" value="1"/>
</dbReference>
<dbReference type="SUPFAM" id="SSF142754">
    <property type="entry name" value="NadA-like"/>
    <property type="match status" value="1"/>
</dbReference>
<name>NADA_CORGL</name>